<accession>Q04118</accession>
<accession>F5H7C1</accession>
<accession>Q15188</accession>
<accession>Q4VAY3</accession>
<accession>Q4VAY4</accession>
<accession>Q7M4M9</accession>
<accession>Q9UCT9</accession>
<sequence>MLLILLSVALLALSSAQSLNEDVSQEESPSVISGKPEGRRPQGGNQPQRTPPPPGKPEGRPPQGGNQSQGPPPRPGKPEGPPPQGGNQSQGPPPRPGKPEGQPPQGGNQSQGPPPRPGKPEGPPPQGGNQSQGPPPRPGKPEGPPPQGGNQSQGPPPRPGKPEGPPPQGGNQSQGPPPHPGKPEGPPPQGGNQSQGPPPRPGKPEGPPPQGGNQSQGPPPRPGKPEGPPPQGGNKPQGPPPRPGKPEGPPPQGGNQSQGPPPRPGKPEGPPSQGGNKPQGPPPHPGKPQGPPPQEGNKPQRPPPPGRPQGPPPPGGNPQQPLPPPAGKPQGPPPPPQGGRPHRPPQGQPPQ</sequence>
<organism>
    <name type="scientific">Homo sapiens</name>
    <name type="common">Human</name>
    <dbReference type="NCBI Taxonomy" id="9606"/>
    <lineage>
        <taxon>Eukaryota</taxon>
        <taxon>Metazoa</taxon>
        <taxon>Chordata</taxon>
        <taxon>Craniata</taxon>
        <taxon>Vertebrata</taxon>
        <taxon>Euteleostomi</taxon>
        <taxon>Mammalia</taxon>
        <taxon>Eutheria</taxon>
        <taxon>Euarchontoglires</taxon>
        <taxon>Primates</taxon>
        <taxon>Haplorrhini</taxon>
        <taxon>Catarrhini</taxon>
        <taxon>Hominidae</taxon>
        <taxon>Homo</taxon>
    </lineage>
</organism>
<feature type="signal peptide" evidence="1">
    <location>
        <begin position="1"/>
        <end position="16"/>
    </location>
</feature>
<feature type="chain" id="PRO_0000022097" description="Basic salivary proline-rich protein 3">
    <location>
        <begin position="17"/>
        <end position="351"/>
    </location>
</feature>
<feature type="repeat" description="1">
    <location>
        <begin position="53"/>
        <end position="73"/>
    </location>
</feature>
<feature type="repeat" description="2">
    <location>
        <begin position="74"/>
        <end position="94"/>
    </location>
</feature>
<feature type="repeat" description="3">
    <location>
        <begin position="95"/>
        <end position="115"/>
    </location>
</feature>
<feature type="repeat" description="4">
    <location>
        <begin position="116"/>
        <end position="136"/>
    </location>
</feature>
<feature type="repeat" description="5">
    <location>
        <begin position="137"/>
        <end position="157"/>
    </location>
</feature>
<feature type="repeat" description="6">
    <location>
        <begin position="158"/>
        <end position="178"/>
    </location>
</feature>
<feature type="repeat" description="7">
    <location>
        <begin position="179"/>
        <end position="199"/>
    </location>
</feature>
<feature type="repeat" description="8">
    <location>
        <begin position="200"/>
        <end position="220"/>
    </location>
</feature>
<feature type="repeat" description="9">
    <location>
        <begin position="221"/>
        <end position="241"/>
    </location>
</feature>
<feature type="repeat" description="10">
    <location>
        <begin position="242"/>
        <end position="261"/>
    </location>
</feature>
<feature type="repeat" description="11">
    <location>
        <begin position="263"/>
        <end position="283"/>
    </location>
</feature>
<feature type="repeat" description="12">
    <location>
        <begin position="284"/>
        <end position="304"/>
    </location>
</feature>
<feature type="region of interest" description="Disordered" evidence="2">
    <location>
        <begin position="17"/>
        <end position="351"/>
    </location>
</feature>
<feature type="region of interest" description="12 X 21 AA tandem repeats of [RHP]-P-G-K-P-[EQ]-G-[PQS]-P-[PS]-Q-[GE]-G-N-[QK]-[SP]-[QR]-[GR]-P-P-P">
    <location>
        <begin position="53"/>
        <end position="304"/>
    </location>
</feature>
<feature type="compositionally biased region" description="Polar residues" evidence="2">
    <location>
        <begin position="20"/>
        <end position="31"/>
    </location>
</feature>
<feature type="compositionally biased region" description="Pro residues" evidence="2">
    <location>
        <begin position="70"/>
        <end position="84"/>
    </location>
</feature>
<feature type="compositionally biased region" description="Low complexity" evidence="2">
    <location>
        <begin position="99"/>
        <end position="111"/>
    </location>
</feature>
<feature type="compositionally biased region" description="Pro residues" evidence="2">
    <location>
        <begin position="112"/>
        <end position="126"/>
    </location>
</feature>
<feature type="compositionally biased region" description="Pro residues" evidence="2">
    <location>
        <begin position="133"/>
        <end position="147"/>
    </location>
</feature>
<feature type="compositionally biased region" description="Pro residues" evidence="2">
    <location>
        <begin position="154"/>
        <end position="168"/>
    </location>
</feature>
<feature type="compositionally biased region" description="Pro residues" evidence="2">
    <location>
        <begin position="175"/>
        <end position="189"/>
    </location>
</feature>
<feature type="compositionally biased region" description="Pro residues" evidence="2">
    <location>
        <begin position="196"/>
        <end position="210"/>
    </location>
</feature>
<feature type="compositionally biased region" description="Pro residues" evidence="2">
    <location>
        <begin position="217"/>
        <end position="252"/>
    </location>
</feature>
<feature type="compositionally biased region" description="Pro residues" evidence="2">
    <location>
        <begin position="259"/>
        <end position="270"/>
    </location>
</feature>
<feature type="compositionally biased region" description="Pro residues" evidence="2">
    <location>
        <begin position="279"/>
        <end position="351"/>
    </location>
</feature>
<feature type="modified residue" description="Pyrrolidone carboxylic acid" evidence="6">
    <location>
        <position position="17"/>
    </location>
</feature>
<feature type="modified residue" description="Phosphoserine" evidence="6">
    <location>
        <position position="24"/>
    </location>
</feature>
<feature type="glycosylation site" description="N-linked (GlcNAc...) asparagine" evidence="1">
    <location>
        <position position="66"/>
    </location>
</feature>
<feature type="glycosylation site" description="N-linked (GlcNAc...) asparagine" evidence="6">
    <location>
        <position position="87"/>
    </location>
</feature>
<feature type="glycosylation site" description="O-linked (Hex) serine" evidence="6">
    <location>
        <position position="89"/>
    </location>
</feature>
<feature type="glycosylation site" description="N-linked (GlcNAc...) asparagine" evidence="1">
    <location>
        <position position="108"/>
    </location>
</feature>
<feature type="glycosylation site" description="N-linked (GlcNAc...) asparagine" evidence="1">
    <location>
        <position position="129"/>
    </location>
</feature>
<feature type="glycosylation site" description="N-linked (GlcNAc...) asparagine" evidence="1">
    <location>
        <position position="150"/>
    </location>
</feature>
<feature type="glycosylation site" description="N-linked (GlcNAc...) asparagine" evidence="1">
    <location>
        <position position="192"/>
    </location>
</feature>
<feature type="glycosylation site" description="N-linked (GlcNAc...) asparagine" evidence="1">
    <location>
        <position position="213"/>
    </location>
</feature>
<feature type="glycosylation site" description="N-linked (GlcNAc...) asparagine" evidence="1">
    <location>
        <position position="234"/>
    </location>
</feature>
<feature type="glycosylation site" description="N-linked (Hex) asparagine; atypical" evidence="6">
    <location>
        <position position="297"/>
    </location>
</feature>
<feature type="sequence variant" id="VAR_088581" description="Associated in cis with 155-P--G-175 del." evidence="8">
    <location>
        <begin position="40"/>
        <end position="60"/>
    </location>
</feature>
<feature type="sequence variant" id="VAR_019696" description="In allele Gl8; forms a disulfide-bonded heterodimer with salivary perodixase." evidence="7">
    <original>R</original>
    <variation>C</variation>
    <location>
        <position position="49"/>
    </location>
</feature>
<feature type="sequence variant" id="VAR_088582" description="Associated in cis with 40-R--R-60 del." evidence="8">
    <location>
        <begin position="155"/>
        <end position="175"/>
    </location>
</feature>
<feature type="sequence variant" id="VAR_055032" description="In dbSNP:rs113564509." evidence="3">
    <original>P</original>
    <variation>Q</variation>
    <location>
        <position position="207"/>
    </location>
</feature>
<feature type="sequence variant" id="VAR_088583" evidence="3">
    <location>
        <begin position="222"/>
        <end position="263"/>
    </location>
</feature>
<feature type="sequence conflict" description="In Ref. 1; CAA30728." evidence="9" ref="1">
    <original>R</original>
    <variation>P</variation>
    <location>
        <position position="40"/>
    </location>
</feature>
<feature type="sequence conflict" description="In Ref. 1; CAA30728." evidence="9" ref="1">
    <original>PQRTPPP</original>
    <variation>SQGPPPR</variation>
    <location>
        <begin position="47"/>
        <end position="53"/>
    </location>
</feature>
<feature type="sequence conflict" description="In Ref. 1; CAA30477." evidence="9" ref="1">
    <original>P</original>
    <variation>S</variation>
    <location>
        <position position="51"/>
    </location>
</feature>
<feature type="sequence conflict" description="In Ref. 1; CAA30728." evidence="9" ref="1">
    <original>R</original>
    <variation>P</variation>
    <location>
        <position position="60"/>
    </location>
</feature>
<feature type="sequence conflict" description="In Ref. 1; CAA30728." evidence="9" ref="1">
    <original>P</original>
    <variation>Q</variation>
    <location>
        <position position="81"/>
    </location>
</feature>
<feature type="sequence conflict" description="In Ref. 1; CAA30728." evidence="9" ref="1">
    <original>Q</original>
    <variation>P</variation>
    <location>
        <position position="102"/>
    </location>
</feature>
<feature type="sequence conflict" description="In Ref. 1; CAA30728." evidence="9" ref="1">
    <original>K</original>
    <variation>E</variation>
    <location>
        <position position="119"/>
    </location>
</feature>
<feature type="sequence conflict" description="In Ref. 1; CAA30728." evidence="9" ref="1">
    <original>R</original>
    <variation>H</variation>
    <location>
        <position position="137"/>
    </location>
</feature>
<feature type="sequence conflict" description="In Ref. 1; CAA30728 and 3; AAH96209/AAH96210/AAH96211." evidence="9" ref="1 3">
    <original>H</original>
    <variation>R</variation>
    <location>
        <position position="179"/>
    </location>
</feature>
<feature type="sequence conflict" description="In Ref. 1; CAA30728 and 3; AAH96209/AAH96210/AAH96211." evidence="9" ref="1 3">
    <original>P</original>
    <variation>S</variation>
    <location>
        <position position="270"/>
    </location>
</feature>
<feature type="sequence conflict" description="In Ref. 1; CAA30728." evidence="9" ref="1">
    <original>Q</original>
    <variation>R</variation>
    <location>
        <position position="279"/>
    </location>
</feature>
<feature type="sequence conflict" description="In Ref. 1; CAA30728." evidence="9" ref="1">
    <original>G</original>
    <variation>R</variation>
    <location>
        <position position="306"/>
    </location>
</feature>
<keyword id="KW-0903">Direct protein sequencing</keyword>
<keyword id="KW-0325">Glycoprotein</keyword>
<keyword id="KW-0597">Phosphoprotein</keyword>
<keyword id="KW-1267">Proteomics identification</keyword>
<keyword id="KW-0873">Pyrrolidone carboxylic acid</keyword>
<keyword id="KW-1185">Reference proteome</keyword>
<keyword id="KW-0677">Repeat</keyword>
<keyword id="KW-0964">Secreted</keyword>
<keyword id="KW-0732">Signal</keyword>
<gene>
    <name type="primary">PRB3</name>
</gene>
<proteinExistence type="evidence at protein level"/>
<reference key="1">
    <citation type="journal article" date="1988" name="Genetics">
        <title>Length polymorphisms in human proline-rich protein genes generated by intragenic unequal crossing over.</title>
        <authorList>
            <person name="Lyons K.M."/>
            <person name="Stein J.H."/>
            <person name="Smithies O."/>
        </authorList>
    </citation>
    <scope>NUCLEOTIDE SEQUENCE [GENOMIC DNA]</scope>
    <scope>POLYMORPHISM</scope>
    <scope>VARIANTS 40-ARG--ARG-60 DEL AND 155-PRO--GLY-175 DEL</scope>
</reference>
<reference key="2">
    <citation type="journal article" date="2006" name="Nature">
        <title>The finished DNA sequence of human chromosome 12.</title>
        <authorList>
            <person name="Scherer S.E."/>
            <person name="Muzny D.M."/>
            <person name="Buhay C.J."/>
            <person name="Chen R."/>
            <person name="Cree A."/>
            <person name="Ding Y."/>
            <person name="Dugan-Rocha S."/>
            <person name="Gill R."/>
            <person name="Gunaratne P."/>
            <person name="Harris R.A."/>
            <person name="Hawes A.C."/>
            <person name="Hernandez J."/>
            <person name="Hodgson A.V."/>
            <person name="Hume J."/>
            <person name="Jackson A."/>
            <person name="Khan Z.M."/>
            <person name="Kovar-Smith C."/>
            <person name="Lewis L.R."/>
            <person name="Lozado R.J."/>
            <person name="Metzker M.L."/>
            <person name="Milosavljevic A."/>
            <person name="Miner G.R."/>
            <person name="Montgomery K.T."/>
            <person name="Morgan M.B."/>
            <person name="Nazareth L.V."/>
            <person name="Scott G."/>
            <person name="Sodergren E."/>
            <person name="Song X.-Z."/>
            <person name="Steffen D."/>
            <person name="Lovering R.C."/>
            <person name="Wheeler D.A."/>
            <person name="Worley K.C."/>
            <person name="Yuan Y."/>
            <person name="Zhang Z."/>
            <person name="Adams C.Q."/>
            <person name="Ansari-Lari M.A."/>
            <person name="Ayele M."/>
            <person name="Brown M.J."/>
            <person name="Chen G."/>
            <person name="Chen Z."/>
            <person name="Clerc-Blankenburg K.P."/>
            <person name="Davis C."/>
            <person name="Delgado O."/>
            <person name="Dinh H.H."/>
            <person name="Draper H."/>
            <person name="Gonzalez-Garay M.L."/>
            <person name="Havlak P."/>
            <person name="Jackson L.R."/>
            <person name="Jacob L.S."/>
            <person name="Kelly S.H."/>
            <person name="Li L."/>
            <person name="Li Z."/>
            <person name="Liu J."/>
            <person name="Liu W."/>
            <person name="Lu J."/>
            <person name="Maheshwari M."/>
            <person name="Nguyen B.-V."/>
            <person name="Okwuonu G.O."/>
            <person name="Pasternak S."/>
            <person name="Perez L.M."/>
            <person name="Plopper F.J.H."/>
            <person name="Santibanez J."/>
            <person name="Shen H."/>
            <person name="Tabor P.E."/>
            <person name="Verduzco D."/>
            <person name="Waldron L."/>
            <person name="Wang Q."/>
            <person name="Williams G.A."/>
            <person name="Zhang J."/>
            <person name="Zhou J."/>
            <person name="Allen C.C."/>
            <person name="Amin A.G."/>
            <person name="Anyalebechi V."/>
            <person name="Bailey M."/>
            <person name="Barbaria J.A."/>
            <person name="Bimage K.E."/>
            <person name="Bryant N.P."/>
            <person name="Burch P.E."/>
            <person name="Burkett C.E."/>
            <person name="Burrell K.L."/>
            <person name="Calderon E."/>
            <person name="Cardenas V."/>
            <person name="Carter K."/>
            <person name="Casias K."/>
            <person name="Cavazos I."/>
            <person name="Cavazos S.R."/>
            <person name="Ceasar H."/>
            <person name="Chacko J."/>
            <person name="Chan S.N."/>
            <person name="Chavez D."/>
            <person name="Christopoulos C."/>
            <person name="Chu J."/>
            <person name="Cockrell R."/>
            <person name="Cox C.D."/>
            <person name="Dang M."/>
            <person name="Dathorne S.R."/>
            <person name="David R."/>
            <person name="Davis C.M."/>
            <person name="Davy-Carroll L."/>
            <person name="Deshazo D.R."/>
            <person name="Donlin J.E."/>
            <person name="D'Souza L."/>
            <person name="Eaves K.A."/>
            <person name="Egan A."/>
            <person name="Emery-Cohen A.J."/>
            <person name="Escotto M."/>
            <person name="Flagg N."/>
            <person name="Forbes L.D."/>
            <person name="Gabisi A.M."/>
            <person name="Garza M."/>
            <person name="Hamilton C."/>
            <person name="Henderson N."/>
            <person name="Hernandez O."/>
            <person name="Hines S."/>
            <person name="Hogues M.E."/>
            <person name="Huang M."/>
            <person name="Idlebird D.G."/>
            <person name="Johnson R."/>
            <person name="Jolivet A."/>
            <person name="Jones S."/>
            <person name="Kagan R."/>
            <person name="King L.M."/>
            <person name="Leal B."/>
            <person name="Lebow H."/>
            <person name="Lee S."/>
            <person name="LeVan J.M."/>
            <person name="Lewis L.C."/>
            <person name="London P."/>
            <person name="Lorensuhewa L.M."/>
            <person name="Loulseged H."/>
            <person name="Lovett D.A."/>
            <person name="Lucier A."/>
            <person name="Lucier R.L."/>
            <person name="Ma J."/>
            <person name="Madu R.C."/>
            <person name="Mapua P."/>
            <person name="Martindale A.D."/>
            <person name="Martinez E."/>
            <person name="Massey E."/>
            <person name="Mawhiney S."/>
            <person name="Meador M.G."/>
            <person name="Mendez S."/>
            <person name="Mercado C."/>
            <person name="Mercado I.C."/>
            <person name="Merritt C.E."/>
            <person name="Miner Z.L."/>
            <person name="Minja E."/>
            <person name="Mitchell T."/>
            <person name="Mohabbat F."/>
            <person name="Mohabbat K."/>
            <person name="Montgomery B."/>
            <person name="Moore N."/>
            <person name="Morris S."/>
            <person name="Munidasa M."/>
            <person name="Ngo R.N."/>
            <person name="Nguyen N.B."/>
            <person name="Nickerson E."/>
            <person name="Nwaokelemeh O.O."/>
            <person name="Nwokenkwo S."/>
            <person name="Obregon M."/>
            <person name="Oguh M."/>
            <person name="Oragunye N."/>
            <person name="Oviedo R.J."/>
            <person name="Parish B.J."/>
            <person name="Parker D.N."/>
            <person name="Parrish J."/>
            <person name="Parks K.L."/>
            <person name="Paul H.A."/>
            <person name="Payton B.A."/>
            <person name="Perez A."/>
            <person name="Perrin W."/>
            <person name="Pickens A."/>
            <person name="Primus E.L."/>
            <person name="Pu L.-L."/>
            <person name="Puazo M."/>
            <person name="Quiles M.M."/>
            <person name="Quiroz J.B."/>
            <person name="Rabata D."/>
            <person name="Reeves K."/>
            <person name="Ruiz S.J."/>
            <person name="Shao H."/>
            <person name="Sisson I."/>
            <person name="Sonaike T."/>
            <person name="Sorelle R.P."/>
            <person name="Sutton A.E."/>
            <person name="Svatek A.F."/>
            <person name="Svetz L.A."/>
            <person name="Tamerisa K.S."/>
            <person name="Taylor T.R."/>
            <person name="Teague B."/>
            <person name="Thomas N."/>
            <person name="Thorn R.D."/>
            <person name="Trejos Z.Y."/>
            <person name="Trevino B.K."/>
            <person name="Ukegbu O.N."/>
            <person name="Urban J.B."/>
            <person name="Vasquez L.I."/>
            <person name="Vera V.A."/>
            <person name="Villasana D.M."/>
            <person name="Wang L."/>
            <person name="Ward-Moore S."/>
            <person name="Warren J.T."/>
            <person name="Wei X."/>
            <person name="White F."/>
            <person name="Williamson A.L."/>
            <person name="Wleczyk R."/>
            <person name="Wooden H.S."/>
            <person name="Wooden S.H."/>
            <person name="Yen J."/>
            <person name="Yoon L."/>
            <person name="Yoon V."/>
            <person name="Zorrilla S.E."/>
            <person name="Nelson D."/>
            <person name="Kucherlapati R."/>
            <person name="Weinstock G."/>
            <person name="Gibbs R.A."/>
        </authorList>
    </citation>
    <scope>NUCLEOTIDE SEQUENCE [LARGE SCALE GENOMIC DNA]</scope>
</reference>
<reference key="3">
    <citation type="journal article" date="2004" name="Genome Res.">
        <title>The status, quality, and expansion of the NIH full-length cDNA project: the Mammalian Gene Collection (MGC).</title>
        <authorList>
            <consortium name="The MGC Project Team"/>
        </authorList>
    </citation>
    <scope>NUCLEOTIDE SEQUENCE [LARGE SCALE MRNA]</scope>
    <scope>VARIANTS GLN-207 AND 222-PRO--ARG-263 DEL</scope>
</reference>
<reference key="4">
    <citation type="journal article" date="1990" name="Am. J. Hum. Genet.">
        <title>Alleles at the PRB3 locus coding for a disulfide-bonded human salivary proline-rich glycoprotein (Gl 8) and a null in an Ashkenazi Jew.</title>
        <authorList>
            <person name="Azen E.A."/>
            <person name="Minaguchi K."/>
            <person name="Latreille P."/>
            <person name="Kim H.-S."/>
        </authorList>
    </citation>
    <scope>NUCLEOTIDE SEQUENCE [GENOMIC DNA] OF 35-309</scope>
    <scope>VARIANT CYS-49</scope>
    <scope>CHARACTERIZATION OF VARIANT CYS-49</scope>
</reference>
<reference key="5">
    <citation type="journal article" date="1991" name="J. Biol. Chem.">
        <title>Structure and bacterial receptor activity of a human salivary proline-rich glycoprotein.</title>
        <authorList>
            <person name="Gillece-Castro B.L."/>
            <person name="Prakobphol A."/>
            <person name="Burlingame A.L."/>
            <person name="Leffler H."/>
            <person name="Fisher S.J."/>
        </authorList>
    </citation>
    <scope>PROTEIN SEQUENCE OF 68-92; 110-127; 131-148; 194-211 AND 215-232</scope>
    <scope>FUNCTION</scope>
    <scope>GLYCOSYLATION</scope>
    <source>
        <tissue>Saliva</tissue>
    </source>
</reference>
<reference key="6">
    <citation type="journal article" date="2008" name="J. Biol. Chem.">
        <title>Identification of Lys-Pro-Gln as a novel cleavage site specificity of saliva-associated proteases.</title>
        <authorList>
            <person name="Helmerhorst E.J."/>
            <person name="Sun X."/>
            <person name="Salih E."/>
            <person name="Oppenheim F.G."/>
        </authorList>
    </citation>
    <scope>PROTEOLYTIC PROCESSING</scope>
    <scope>IDENTIFICATION BY MASS SPECTROMETRY</scope>
</reference>
<reference key="7">
    <citation type="journal article" date="2010" name="Proteomics">
        <title>Finding new posttranslational modifications in salivary proline-rich proteins.</title>
        <authorList>
            <person name="Vitorino R."/>
            <person name="Alves R."/>
            <person name="Barros A."/>
            <person name="Caseiro A."/>
            <person name="Ferreira R."/>
            <person name="Lobo M.C."/>
            <person name="Bastos A."/>
            <person name="Duarte J."/>
            <person name="Carvalho D."/>
            <person name="Santos L.L."/>
            <person name="Amado F.L."/>
        </authorList>
    </citation>
    <scope>GLYCOSYLATION AT ASN-87; SER-89 AND ASN-297</scope>
    <scope>PYROGLUTAMATE FORMATION AT GLN-17</scope>
    <scope>PHOSPHORYLATION AT SER-24</scope>
    <scope>IDENTIFICATION BY MASS SPECTROMETRY</scope>
</reference>
<name>PRB3_HUMAN</name>
<evidence type="ECO:0000255" key="1"/>
<evidence type="ECO:0000256" key="2">
    <source>
        <dbReference type="SAM" id="MobiDB-lite"/>
    </source>
</evidence>
<evidence type="ECO:0000269" key="3">
    <source>
    </source>
</evidence>
<evidence type="ECO:0000269" key="4">
    <source>
    </source>
</evidence>
<evidence type="ECO:0000269" key="5">
    <source>
    </source>
</evidence>
<evidence type="ECO:0000269" key="6">
    <source>
    </source>
</evidence>
<evidence type="ECO:0000269" key="7">
    <source>
    </source>
</evidence>
<evidence type="ECO:0000269" key="8">
    <source>
    </source>
</evidence>
<evidence type="ECO:0000305" key="9"/>
<protein>
    <recommendedName>
        <fullName>Basic salivary proline-rich protein 3</fullName>
    </recommendedName>
    <alternativeName>
        <fullName>Parotid salivary glycoprotein G1</fullName>
    </alternativeName>
    <alternativeName>
        <fullName>Proline-rich protein G1</fullName>
    </alternativeName>
</protein>
<dbReference type="EMBL" id="X07637">
    <property type="protein sequence ID" value="CAA30477.1"/>
    <property type="status" value="ALT_SEQ"/>
    <property type="molecule type" value="Genomic_DNA"/>
</dbReference>
<dbReference type="EMBL" id="X07881">
    <property type="protein sequence ID" value="CAA30728.1"/>
    <property type="molecule type" value="Genomic_DNA"/>
</dbReference>
<dbReference type="EMBL" id="AC010176">
    <property type="status" value="NOT_ANNOTATED_CDS"/>
    <property type="molecule type" value="Genomic_DNA"/>
</dbReference>
<dbReference type="EMBL" id="AC244131">
    <property type="status" value="NOT_ANNOTATED_CDS"/>
    <property type="molecule type" value="Genomic_DNA"/>
</dbReference>
<dbReference type="EMBL" id="BC096209">
    <property type="protein sequence ID" value="AAH96209.1"/>
    <property type="molecule type" value="mRNA"/>
</dbReference>
<dbReference type="EMBL" id="BC096210">
    <property type="protein sequence ID" value="AAH96210.1"/>
    <property type="molecule type" value="mRNA"/>
</dbReference>
<dbReference type="EMBL" id="BC096211">
    <property type="protein sequence ID" value="AAH96211.1"/>
    <property type="molecule type" value="mRNA"/>
</dbReference>
<dbReference type="CCDS" id="CCDS91655.1"/>
<dbReference type="PIR" id="A36298">
    <property type="entry name" value="A36298"/>
</dbReference>
<dbReference type="PIR" id="B36298">
    <property type="entry name" value="B36298"/>
</dbReference>
<dbReference type="PIR" id="S10889">
    <property type="entry name" value="S10889"/>
</dbReference>
<dbReference type="RefSeq" id="NP_001381791.1">
    <property type="nucleotide sequence ID" value="NM_001394862.1"/>
</dbReference>
<dbReference type="FunCoup" id="Q04118">
    <property type="interactions" value="174"/>
</dbReference>
<dbReference type="IntAct" id="Q04118">
    <property type="interactions" value="14"/>
</dbReference>
<dbReference type="STRING" id="9606.ENSP00000442626"/>
<dbReference type="GlyCosmos" id="Q04118">
    <property type="glycosylation" value="10 sites, No reported glycans"/>
</dbReference>
<dbReference type="GlyGen" id="Q04118">
    <property type="glycosylation" value="11 sites"/>
</dbReference>
<dbReference type="iPTMnet" id="Q04118"/>
<dbReference type="PhosphoSitePlus" id="Q04118"/>
<dbReference type="BioMuta" id="PRB3"/>
<dbReference type="DMDM" id="229462763"/>
<dbReference type="jPOST" id="Q04118"/>
<dbReference type="MassIVE" id="Q04118"/>
<dbReference type="PaxDb" id="9606-ENSP00000442626"/>
<dbReference type="PeptideAtlas" id="Q04118"/>
<dbReference type="ProteomicsDB" id="27443"/>
<dbReference type="ProteomicsDB" id="58235"/>
<dbReference type="TopDownProteomics" id="Q04118"/>
<dbReference type="Antibodypedia" id="71505">
    <property type="antibodies" value="14 antibodies from 6 providers"/>
</dbReference>
<dbReference type="Ensembl" id="ENST00000538488.3">
    <property type="protein sequence ID" value="ENSP00000442626.2"/>
    <property type="gene ID" value="ENSG00000197870.14"/>
</dbReference>
<dbReference type="Ensembl" id="ENST00000632935.1">
    <property type="protein sequence ID" value="ENSP00000488472.1"/>
    <property type="gene ID" value="ENSG00000275624.4"/>
</dbReference>
<dbReference type="GeneID" id="5544"/>
<dbReference type="MANE-Select" id="ENST00000538488.3">
    <property type="protein sequence ID" value="ENSP00000442626.2"/>
    <property type="RefSeq nucleotide sequence ID" value="NM_001394862.1"/>
    <property type="RefSeq protein sequence ID" value="NP_001381791.1"/>
</dbReference>
<dbReference type="UCSC" id="uc058lgs.1">
    <property type="organism name" value="human"/>
</dbReference>
<dbReference type="AGR" id="HGNC:9339"/>
<dbReference type="GeneCards" id="PRB3"/>
<dbReference type="HGNC" id="HGNC:9339">
    <property type="gene designation" value="PRB3"/>
</dbReference>
<dbReference type="HPA" id="ENSG00000197870">
    <property type="expression patterns" value="Tissue enriched (salivary)"/>
</dbReference>
<dbReference type="MIM" id="168840">
    <property type="type" value="gene"/>
</dbReference>
<dbReference type="neXtProt" id="NX_Q04118"/>
<dbReference type="OpenTargets" id="ENSG00000197870"/>
<dbReference type="PharmGKB" id="PA33701"/>
<dbReference type="VEuPathDB" id="HostDB:ENSG00000197870"/>
<dbReference type="eggNOG" id="ENOG502SEXN">
    <property type="taxonomic scope" value="Eukaryota"/>
</dbReference>
<dbReference type="GeneTree" id="ENSGT00730000111783"/>
<dbReference type="HOGENOM" id="CLU_054768_0_0_1"/>
<dbReference type="InParanoid" id="Q04118"/>
<dbReference type="OMA" id="AQWQHAP"/>
<dbReference type="PAN-GO" id="Q04118">
    <property type="GO annotations" value="0 GO annotations based on evolutionary models"/>
</dbReference>
<dbReference type="PathwayCommons" id="Q04118"/>
<dbReference type="SignaLink" id="Q04118"/>
<dbReference type="Pharos" id="Q04118">
    <property type="development level" value="Tdark"/>
</dbReference>
<dbReference type="PRO" id="PR:Q04118"/>
<dbReference type="Proteomes" id="UP000005640">
    <property type="component" value="Chromosome 12"/>
</dbReference>
<dbReference type="RNAct" id="Q04118">
    <property type="molecule type" value="protein"/>
</dbReference>
<dbReference type="Bgee" id="ENSG00000197870">
    <property type="expression patterns" value="Expressed in olfactory segment of nasal mucosa and 87 other cell types or tissues"/>
</dbReference>
<dbReference type="ExpressionAtlas" id="Q04118">
    <property type="expression patterns" value="baseline and differential"/>
</dbReference>
<dbReference type="GO" id="GO:0005576">
    <property type="term" value="C:extracellular region"/>
    <property type="evidence" value="ECO:0000303"/>
    <property type="project" value="UniProtKB"/>
</dbReference>
<dbReference type="GO" id="GO:0050829">
    <property type="term" value="P:defense response to Gram-negative bacterium"/>
    <property type="evidence" value="ECO:0000303"/>
    <property type="project" value="UniProtKB"/>
</dbReference>
<dbReference type="InterPro" id="IPR026086">
    <property type="entry name" value="Pro-rich"/>
</dbReference>
<dbReference type="PANTHER" id="PTHR23203:SF4">
    <property type="entry name" value="BASIC SALIVARY PROLINE-RICH PROTEIN 3"/>
    <property type="match status" value="1"/>
</dbReference>
<dbReference type="PANTHER" id="PTHR23203">
    <property type="entry name" value="PROLINE-RICH PROTEIN"/>
    <property type="match status" value="1"/>
</dbReference>
<dbReference type="Pfam" id="PF15240">
    <property type="entry name" value="Pro-rich"/>
    <property type="match status" value="2"/>
</dbReference>
<dbReference type="SMART" id="SM01412">
    <property type="entry name" value="Pro-rich"/>
    <property type="match status" value="2"/>
</dbReference>
<comment type="function">
    <text evidence="5">Acts as a receptor for the Gram-negative bacterium F.nucleatum.</text>
</comment>
<comment type="interaction">
    <interactant intactId="EBI-13360404">
        <id>Q04118</id>
    </interactant>
    <interactant intactId="EBI-2515857">
        <id>O43681</id>
        <label>GET3</label>
    </interactant>
    <organismsDiffer>false</organismsDiffer>
    <experiments>3</experiments>
</comment>
<comment type="interaction">
    <interactant intactId="EBI-13360404">
        <id>Q04118</id>
    </interactant>
    <interactant intactId="EBI-741171">
        <id>Q96AL5</id>
        <label>PBX3</label>
    </interactant>
    <organismsDiffer>false</organismsDiffer>
    <experiments>3</experiments>
</comment>
<comment type="interaction">
    <interactant intactId="EBI-13360404">
        <id>Q04118</id>
    </interactant>
    <interactant intactId="EBI-5544229">
        <id>P30405</id>
        <label>PPIF</label>
    </interactant>
    <organismsDiffer>false</organismsDiffer>
    <experiments>3</experiments>
</comment>
<comment type="interaction">
    <interactant intactId="EBI-13360404">
        <id>Q04118</id>
    </interactant>
    <interactant intactId="EBI-744081">
        <id>Q96EQ0</id>
        <label>SGTB</label>
    </interactant>
    <organismsDiffer>false</organismsDiffer>
    <experiments>3</experiments>
</comment>
<comment type="interaction">
    <interactant intactId="EBI-13360404">
        <id>Q04118</id>
    </interactant>
    <interactant intactId="EBI-697911">
        <id>Q99961</id>
        <label>SH3GL1</label>
    </interactant>
    <organismsDiffer>false</organismsDiffer>
    <experiments>3</experiments>
</comment>
<comment type="interaction">
    <interactant intactId="EBI-13360404">
        <id>Q04118</id>
    </interactant>
    <interactant intactId="EBI-702328">
        <id>Q969Z0</id>
        <label>TBRG4</label>
    </interactant>
    <organismsDiffer>false</organismsDiffer>
    <experiments>3</experiments>
</comment>
<comment type="subcellular location">
    <subcellularLocation>
        <location>Secreted</location>
    </subcellularLocation>
</comment>
<comment type="PTM">
    <text evidence="5 6">N- and O-glycosylated; contains about 50% carbohydrate. This is composed of highly fucosylated N-linked saccharides, the major structure is a biantennary asialosaccharide containing 2 fucose residues on one antenna and an unsubstituted terminal lactosamine sequence on the other. The Gram-negative bacterium F.nucleatum binds to carbohydrates containing unsubstituted GalBeta1,4GlcNAc residues. N-glycosylation on Asn-87 is prevalent in head and neck cancer patients.</text>
</comment>
<comment type="PTM">
    <text evidence="4">Proteolytically cleaved at the tripeptide Xaa-Pro-Gln, where Xaa in the P(3) position is mostly lysine. The endoprotease may be of microbial origin. Besides on the N-terminal of mature PRB3, pyroglutamate formation found on at least Gln-67, Gln-88, Gln-256 and Gln-337.</text>
</comment>
<comment type="polymorphism">
    <text evidence="8">The number of repeats is polymorphic and varies among different alleles, at least four alleles (small, medium, large and very large) are known.</text>
</comment>
<comment type="sequence caution" evidence="9">
    <conflict type="erroneous translation">
        <sequence resource="EMBL-CDS" id="CAA30477"/>
    </conflict>
    <text>Wrong choice of frame.</text>
</comment>